<feature type="chain" id="PRO_0000258381" description="Phosphoribosylformylglycinamidine cyclo-ligase">
    <location>
        <begin position="1"/>
        <end position="346"/>
    </location>
</feature>
<protein>
    <recommendedName>
        <fullName evidence="1">Phosphoribosylformylglycinamidine cyclo-ligase</fullName>
        <ecNumber evidence="1">6.3.3.1</ecNumber>
    </recommendedName>
    <alternativeName>
        <fullName evidence="1">AIR synthase</fullName>
    </alternativeName>
    <alternativeName>
        <fullName evidence="1">AIRS</fullName>
    </alternativeName>
    <alternativeName>
        <fullName evidence="1">Phosphoribosyl-aminoimidazole synthetase</fullName>
    </alternativeName>
</protein>
<accession>Q46IM4</accession>
<sequence length="346" mass="37258">MDYKTAGVDVTAGRAFVERIKSCVEKTHKSEVIGGLGGFGGCIRIPKGFESPVLVSGTDGVGTKLELAQQYGCHFGVGIDLVAMCVNDVITNGARPLFFLDYIASGTLTPDALAEVIEGIAAGCCQSDCSLLGGETAEMPGFYPIGRYDLAGFCVGIVENHHLIDGTKINCGDQIIGIKSNGVHSNGFSLVRKVLSMANVDENTLFGKDKRNLIQSLLEPTAIYVQLVEKLLRENLPIHGMTHITGGGLPENLPRIFPSGLSPHIDITTWEITEIFNWLQNAGDIPEIDLWNTFNMGIGFCLIVPKNEVNSALEICIKNDFEAWNIGQVVESQNNSKNIGIFGIPS</sequence>
<evidence type="ECO:0000255" key="1">
    <source>
        <dbReference type="HAMAP-Rule" id="MF_00741"/>
    </source>
</evidence>
<comment type="catalytic activity">
    <reaction evidence="1">
        <text>2-formamido-N(1)-(5-O-phospho-beta-D-ribosyl)acetamidine + ATP = 5-amino-1-(5-phospho-beta-D-ribosyl)imidazole + ADP + phosphate + H(+)</text>
        <dbReference type="Rhea" id="RHEA:23032"/>
        <dbReference type="ChEBI" id="CHEBI:15378"/>
        <dbReference type="ChEBI" id="CHEBI:30616"/>
        <dbReference type="ChEBI" id="CHEBI:43474"/>
        <dbReference type="ChEBI" id="CHEBI:137981"/>
        <dbReference type="ChEBI" id="CHEBI:147287"/>
        <dbReference type="ChEBI" id="CHEBI:456216"/>
        <dbReference type="EC" id="6.3.3.1"/>
    </reaction>
</comment>
<comment type="pathway">
    <text evidence="1">Purine metabolism; IMP biosynthesis via de novo pathway; 5-amino-1-(5-phospho-D-ribosyl)imidazole from N(2)-formyl-N(1)-(5-phospho-D-ribosyl)glycinamide: step 2/2.</text>
</comment>
<comment type="subcellular location">
    <subcellularLocation>
        <location evidence="1">Cytoplasm</location>
    </subcellularLocation>
</comment>
<comment type="similarity">
    <text evidence="1">Belongs to the AIR synthase family.</text>
</comment>
<proteinExistence type="inferred from homology"/>
<keyword id="KW-0067">ATP-binding</keyword>
<keyword id="KW-0963">Cytoplasm</keyword>
<keyword id="KW-0436">Ligase</keyword>
<keyword id="KW-0547">Nucleotide-binding</keyword>
<keyword id="KW-0658">Purine biosynthesis</keyword>
<keyword id="KW-1185">Reference proteome</keyword>
<name>PUR5_PROMT</name>
<gene>
    <name evidence="1" type="primary">purM</name>
    <name type="ordered locus">PMN2A_1164</name>
</gene>
<reference key="1">
    <citation type="journal article" date="2007" name="PLoS Genet.">
        <title>Patterns and implications of gene gain and loss in the evolution of Prochlorococcus.</title>
        <authorList>
            <person name="Kettler G.C."/>
            <person name="Martiny A.C."/>
            <person name="Huang K."/>
            <person name="Zucker J."/>
            <person name="Coleman M.L."/>
            <person name="Rodrigue S."/>
            <person name="Chen F."/>
            <person name="Lapidus A."/>
            <person name="Ferriera S."/>
            <person name="Johnson J."/>
            <person name="Steglich C."/>
            <person name="Church G.M."/>
            <person name="Richardson P."/>
            <person name="Chisholm S.W."/>
        </authorList>
    </citation>
    <scope>NUCLEOTIDE SEQUENCE [LARGE SCALE GENOMIC DNA]</scope>
    <source>
        <strain>NATL2A</strain>
    </source>
</reference>
<organism>
    <name type="scientific">Prochlorococcus marinus (strain NATL2A)</name>
    <dbReference type="NCBI Taxonomy" id="59920"/>
    <lineage>
        <taxon>Bacteria</taxon>
        <taxon>Bacillati</taxon>
        <taxon>Cyanobacteriota</taxon>
        <taxon>Cyanophyceae</taxon>
        <taxon>Synechococcales</taxon>
        <taxon>Prochlorococcaceae</taxon>
        <taxon>Prochlorococcus</taxon>
    </lineage>
</organism>
<dbReference type="EC" id="6.3.3.1" evidence="1"/>
<dbReference type="EMBL" id="CP000095">
    <property type="protein sequence ID" value="AAZ58654.1"/>
    <property type="molecule type" value="Genomic_DNA"/>
</dbReference>
<dbReference type="RefSeq" id="WP_011295508.1">
    <property type="nucleotide sequence ID" value="NC_007335.2"/>
</dbReference>
<dbReference type="SMR" id="Q46IM4"/>
<dbReference type="STRING" id="59920.PMN2A_1164"/>
<dbReference type="KEGG" id="pmn:PMN2A_1164"/>
<dbReference type="HOGENOM" id="CLU_047116_0_0_3"/>
<dbReference type="OrthoDB" id="9802507at2"/>
<dbReference type="PhylomeDB" id="Q46IM4"/>
<dbReference type="UniPathway" id="UPA00074">
    <property type="reaction ID" value="UER00129"/>
</dbReference>
<dbReference type="Proteomes" id="UP000002535">
    <property type="component" value="Chromosome"/>
</dbReference>
<dbReference type="GO" id="GO:0005829">
    <property type="term" value="C:cytosol"/>
    <property type="evidence" value="ECO:0007669"/>
    <property type="project" value="TreeGrafter"/>
</dbReference>
<dbReference type="GO" id="GO:0005524">
    <property type="term" value="F:ATP binding"/>
    <property type="evidence" value="ECO:0007669"/>
    <property type="project" value="UniProtKB-KW"/>
</dbReference>
<dbReference type="GO" id="GO:0004637">
    <property type="term" value="F:phosphoribosylamine-glycine ligase activity"/>
    <property type="evidence" value="ECO:0007669"/>
    <property type="project" value="TreeGrafter"/>
</dbReference>
<dbReference type="GO" id="GO:0004641">
    <property type="term" value="F:phosphoribosylformylglycinamidine cyclo-ligase activity"/>
    <property type="evidence" value="ECO:0007669"/>
    <property type="project" value="UniProtKB-UniRule"/>
</dbReference>
<dbReference type="GO" id="GO:0006189">
    <property type="term" value="P:'de novo' IMP biosynthetic process"/>
    <property type="evidence" value="ECO:0007669"/>
    <property type="project" value="UniProtKB-UniRule"/>
</dbReference>
<dbReference type="GO" id="GO:0046084">
    <property type="term" value="P:adenine biosynthetic process"/>
    <property type="evidence" value="ECO:0007669"/>
    <property type="project" value="TreeGrafter"/>
</dbReference>
<dbReference type="CDD" id="cd02196">
    <property type="entry name" value="PurM"/>
    <property type="match status" value="1"/>
</dbReference>
<dbReference type="FunFam" id="3.30.1330.10:FF:000001">
    <property type="entry name" value="Phosphoribosylformylglycinamidine cyclo-ligase"/>
    <property type="match status" value="1"/>
</dbReference>
<dbReference type="FunFam" id="3.90.650.10:FF:000011">
    <property type="entry name" value="Phosphoribosylformylglycinamidine cyclo-ligase"/>
    <property type="match status" value="1"/>
</dbReference>
<dbReference type="Gene3D" id="3.90.650.10">
    <property type="entry name" value="PurM-like C-terminal domain"/>
    <property type="match status" value="1"/>
</dbReference>
<dbReference type="Gene3D" id="3.30.1330.10">
    <property type="entry name" value="PurM-like, N-terminal domain"/>
    <property type="match status" value="1"/>
</dbReference>
<dbReference type="HAMAP" id="MF_00741">
    <property type="entry name" value="AIRS"/>
    <property type="match status" value="1"/>
</dbReference>
<dbReference type="InterPro" id="IPR010918">
    <property type="entry name" value="PurM-like_C_dom"/>
</dbReference>
<dbReference type="InterPro" id="IPR036676">
    <property type="entry name" value="PurM-like_C_sf"/>
</dbReference>
<dbReference type="InterPro" id="IPR016188">
    <property type="entry name" value="PurM-like_N"/>
</dbReference>
<dbReference type="InterPro" id="IPR036921">
    <property type="entry name" value="PurM-like_N_sf"/>
</dbReference>
<dbReference type="InterPro" id="IPR004733">
    <property type="entry name" value="PurM_cligase"/>
</dbReference>
<dbReference type="NCBIfam" id="TIGR00878">
    <property type="entry name" value="purM"/>
    <property type="match status" value="1"/>
</dbReference>
<dbReference type="PANTHER" id="PTHR10520:SF12">
    <property type="entry name" value="TRIFUNCTIONAL PURINE BIOSYNTHETIC PROTEIN ADENOSINE-3"/>
    <property type="match status" value="1"/>
</dbReference>
<dbReference type="PANTHER" id="PTHR10520">
    <property type="entry name" value="TRIFUNCTIONAL PURINE BIOSYNTHETIC PROTEIN ADENOSINE-3-RELATED"/>
    <property type="match status" value="1"/>
</dbReference>
<dbReference type="Pfam" id="PF00586">
    <property type="entry name" value="AIRS"/>
    <property type="match status" value="1"/>
</dbReference>
<dbReference type="Pfam" id="PF02769">
    <property type="entry name" value="AIRS_C"/>
    <property type="match status" value="1"/>
</dbReference>
<dbReference type="SUPFAM" id="SSF56042">
    <property type="entry name" value="PurM C-terminal domain-like"/>
    <property type="match status" value="1"/>
</dbReference>
<dbReference type="SUPFAM" id="SSF55326">
    <property type="entry name" value="PurM N-terminal domain-like"/>
    <property type="match status" value="1"/>
</dbReference>